<evidence type="ECO:0000255" key="1">
    <source>
        <dbReference type="HAMAP-Rule" id="MF_00632"/>
    </source>
</evidence>
<proteinExistence type="inferred from homology"/>
<feature type="chain" id="PRO_1000130612" description="Nucleotide-binding protein CbuK_1936">
    <location>
        <begin position="1"/>
        <end position="160"/>
    </location>
</feature>
<keyword id="KW-0547">Nucleotide-binding</keyword>
<reference key="1">
    <citation type="journal article" date="2009" name="Infect. Immun.">
        <title>Comparative genomics reveal extensive transposon-mediated genomic plasticity and diversity among potential effector proteins within the genus Coxiella.</title>
        <authorList>
            <person name="Beare P.A."/>
            <person name="Unsworth N."/>
            <person name="Andoh M."/>
            <person name="Voth D.E."/>
            <person name="Omsland A."/>
            <person name="Gilk S.D."/>
            <person name="Williams K.P."/>
            <person name="Sobral B.W."/>
            <person name="Kupko J.J. III"/>
            <person name="Porcella S.F."/>
            <person name="Samuel J.E."/>
            <person name="Heinzen R.A."/>
        </authorList>
    </citation>
    <scope>NUCLEOTIDE SEQUENCE [LARGE SCALE GENOMIC DNA]</scope>
    <source>
        <strain>CbuK_Q154</strain>
    </source>
</reference>
<accession>B6J5L9</accession>
<protein>
    <recommendedName>
        <fullName evidence="1">Nucleotide-binding protein CbuK_1936</fullName>
    </recommendedName>
</protein>
<sequence>MPSFDIQSELNKHEVSNAVDQANREVATRFDFKGSGATYKYEGNSITLQAETDFQLKQMIDILQNKFAKRQIDVAHMRLEDPIIQHKSAQQTVMLLEGIDQTAAKKIIKLIKDQKLKVQAAIQGEKVRVTGKKRDDLQSVIGLLKEQEIGLPLQFDNFRD</sequence>
<dbReference type="EMBL" id="CP001020">
    <property type="protein sequence ID" value="ACJ21045.1"/>
    <property type="molecule type" value="Genomic_DNA"/>
</dbReference>
<dbReference type="RefSeq" id="WP_005769443.1">
    <property type="nucleotide sequence ID" value="NC_011528.1"/>
</dbReference>
<dbReference type="SMR" id="B6J5L9"/>
<dbReference type="KEGG" id="cbc:CbuK_1936"/>
<dbReference type="HOGENOM" id="CLU_099839_1_0_6"/>
<dbReference type="GO" id="GO:0005829">
    <property type="term" value="C:cytosol"/>
    <property type="evidence" value="ECO:0007669"/>
    <property type="project" value="TreeGrafter"/>
</dbReference>
<dbReference type="GO" id="GO:0000166">
    <property type="term" value="F:nucleotide binding"/>
    <property type="evidence" value="ECO:0007669"/>
    <property type="project" value="TreeGrafter"/>
</dbReference>
<dbReference type="CDD" id="cd11740">
    <property type="entry name" value="YajQ_like"/>
    <property type="match status" value="1"/>
</dbReference>
<dbReference type="FunFam" id="3.30.70.860:FF:000001">
    <property type="entry name" value="UPF0234 protein YajQ"/>
    <property type="match status" value="1"/>
</dbReference>
<dbReference type="Gene3D" id="3.30.70.860">
    <property type="match status" value="1"/>
</dbReference>
<dbReference type="Gene3D" id="3.30.70.990">
    <property type="entry name" value="YajQ-like, domain 2"/>
    <property type="match status" value="1"/>
</dbReference>
<dbReference type="HAMAP" id="MF_00632">
    <property type="entry name" value="YajQ"/>
    <property type="match status" value="1"/>
</dbReference>
<dbReference type="InterPro" id="IPR007551">
    <property type="entry name" value="DUF520"/>
</dbReference>
<dbReference type="InterPro" id="IPR035571">
    <property type="entry name" value="UPF0234-like_C"/>
</dbReference>
<dbReference type="InterPro" id="IPR035570">
    <property type="entry name" value="UPF0234_N"/>
</dbReference>
<dbReference type="InterPro" id="IPR036183">
    <property type="entry name" value="YajQ-like_sf"/>
</dbReference>
<dbReference type="NCBIfam" id="NF003819">
    <property type="entry name" value="PRK05412.1"/>
    <property type="match status" value="1"/>
</dbReference>
<dbReference type="PANTHER" id="PTHR30476">
    <property type="entry name" value="UPF0234 PROTEIN YAJQ"/>
    <property type="match status" value="1"/>
</dbReference>
<dbReference type="PANTHER" id="PTHR30476:SF0">
    <property type="entry name" value="UPF0234 PROTEIN YAJQ"/>
    <property type="match status" value="1"/>
</dbReference>
<dbReference type="Pfam" id="PF04461">
    <property type="entry name" value="DUF520"/>
    <property type="match status" value="1"/>
</dbReference>
<dbReference type="SUPFAM" id="SSF89963">
    <property type="entry name" value="YajQ-like"/>
    <property type="match status" value="2"/>
</dbReference>
<gene>
    <name type="ordered locus">CbuK_1936</name>
</gene>
<organism>
    <name type="scientific">Coxiella burnetii (strain CbuK_Q154)</name>
    <name type="common">Coxiella burnetii (strain Q154)</name>
    <dbReference type="NCBI Taxonomy" id="434924"/>
    <lineage>
        <taxon>Bacteria</taxon>
        <taxon>Pseudomonadati</taxon>
        <taxon>Pseudomonadota</taxon>
        <taxon>Gammaproteobacteria</taxon>
        <taxon>Legionellales</taxon>
        <taxon>Coxiellaceae</taxon>
        <taxon>Coxiella</taxon>
    </lineage>
</organism>
<name>Y1936_COXB1</name>
<comment type="function">
    <text evidence="1">Nucleotide-binding protein.</text>
</comment>
<comment type="similarity">
    <text evidence="1">Belongs to the YajQ family.</text>
</comment>